<dbReference type="EC" id="6.3.2.4" evidence="2"/>
<dbReference type="EMBL" id="CP000488">
    <property type="protein sequence ID" value="ABL02486.1"/>
    <property type="molecule type" value="Genomic_DNA"/>
</dbReference>
<dbReference type="RefSeq" id="WP_011738111.1">
    <property type="nucleotide sequence ID" value="NC_008610.1"/>
</dbReference>
<dbReference type="SMR" id="A1AX29"/>
<dbReference type="STRING" id="413404.Rmag_0759"/>
<dbReference type="KEGG" id="rma:Rmag_0759"/>
<dbReference type="eggNOG" id="COG1181">
    <property type="taxonomic scope" value="Bacteria"/>
</dbReference>
<dbReference type="HOGENOM" id="CLU_039268_1_2_6"/>
<dbReference type="OrthoDB" id="9813261at2"/>
<dbReference type="UniPathway" id="UPA00219"/>
<dbReference type="Proteomes" id="UP000002587">
    <property type="component" value="Chromosome"/>
</dbReference>
<dbReference type="GO" id="GO:0005829">
    <property type="term" value="C:cytosol"/>
    <property type="evidence" value="ECO:0007669"/>
    <property type="project" value="TreeGrafter"/>
</dbReference>
<dbReference type="GO" id="GO:0005524">
    <property type="term" value="F:ATP binding"/>
    <property type="evidence" value="ECO:0007669"/>
    <property type="project" value="UniProtKB-KW"/>
</dbReference>
<dbReference type="GO" id="GO:0008716">
    <property type="term" value="F:D-alanine-D-alanine ligase activity"/>
    <property type="evidence" value="ECO:0007669"/>
    <property type="project" value="UniProtKB-UniRule"/>
</dbReference>
<dbReference type="GO" id="GO:0046872">
    <property type="term" value="F:metal ion binding"/>
    <property type="evidence" value="ECO:0007669"/>
    <property type="project" value="UniProtKB-KW"/>
</dbReference>
<dbReference type="GO" id="GO:0071555">
    <property type="term" value="P:cell wall organization"/>
    <property type="evidence" value="ECO:0007669"/>
    <property type="project" value="UniProtKB-KW"/>
</dbReference>
<dbReference type="GO" id="GO:0009252">
    <property type="term" value="P:peptidoglycan biosynthetic process"/>
    <property type="evidence" value="ECO:0007669"/>
    <property type="project" value="UniProtKB-UniRule"/>
</dbReference>
<dbReference type="GO" id="GO:0008360">
    <property type="term" value="P:regulation of cell shape"/>
    <property type="evidence" value="ECO:0007669"/>
    <property type="project" value="UniProtKB-KW"/>
</dbReference>
<dbReference type="FunFam" id="3.30.470.20:FF:000008">
    <property type="entry name" value="D-alanine--D-alanine ligase"/>
    <property type="match status" value="1"/>
</dbReference>
<dbReference type="Gene3D" id="3.40.50.20">
    <property type="match status" value="1"/>
</dbReference>
<dbReference type="Gene3D" id="3.30.1490.20">
    <property type="entry name" value="ATP-grasp fold, A domain"/>
    <property type="match status" value="1"/>
</dbReference>
<dbReference type="Gene3D" id="3.30.470.20">
    <property type="entry name" value="ATP-grasp fold, B domain"/>
    <property type="match status" value="1"/>
</dbReference>
<dbReference type="HAMAP" id="MF_00047">
    <property type="entry name" value="Dala_Dala_lig"/>
    <property type="match status" value="1"/>
</dbReference>
<dbReference type="InterPro" id="IPR011761">
    <property type="entry name" value="ATP-grasp"/>
</dbReference>
<dbReference type="InterPro" id="IPR013815">
    <property type="entry name" value="ATP_grasp_subdomain_1"/>
</dbReference>
<dbReference type="InterPro" id="IPR000291">
    <property type="entry name" value="D-Ala_lig_Van_CS"/>
</dbReference>
<dbReference type="InterPro" id="IPR005905">
    <property type="entry name" value="D_ala_D_ala"/>
</dbReference>
<dbReference type="InterPro" id="IPR011095">
    <property type="entry name" value="Dala_Dala_lig_C"/>
</dbReference>
<dbReference type="InterPro" id="IPR016185">
    <property type="entry name" value="PreATP-grasp_dom_sf"/>
</dbReference>
<dbReference type="NCBIfam" id="TIGR01205">
    <property type="entry name" value="D_ala_D_alaTIGR"/>
    <property type="match status" value="1"/>
</dbReference>
<dbReference type="NCBIfam" id="NF002378">
    <property type="entry name" value="PRK01372.1"/>
    <property type="match status" value="1"/>
</dbReference>
<dbReference type="PANTHER" id="PTHR23132">
    <property type="entry name" value="D-ALANINE--D-ALANINE LIGASE"/>
    <property type="match status" value="1"/>
</dbReference>
<dbReference type="PANTHER" id="PTHR23132:SF23">
    <property type="entry name" value="D-ALANINE--D-ALANINE LIGASE B"/>
    <property type="match status" value="1"/>
</dbReference>
<dbReference type="Pfam" id="PF07478">
    <property type="entry name" value="Dala_Dala_lig_C"/>
    <property type="match status" value="1"/>
</dbReference>
<dbReference type="PIRSF" id="PIRSF039102">
    <property type="entry name" value="Ddl/VanB"/>
    <property type="match status" value="1"/>
</dbReference>
<dbReference type="SUPFAM" id="SSF56059">
    <property type="entry name" value="Glutathione synthetase ATP-binding domain-like"/>
    <property type="match status" value="1"/>
</dbReference>
<dbReference type="SUPFAM" id="SSF52440">
    <property type="entry name" value="PreATP-grasp domain"/>
    <property type="match status" value="1"/>
</dbReference>
<dbReference type="PROSITE" id="PS50975">
    <property type="entry name" value="ATP_GRASP"/>
    <property type="match status" value="1"/>
</dbReference>
<dbReference type="PROSITE" id="PS00844">
    <property type="entry name" value="DALA_DALA_LIGASE_2"/>
    <property type="match status" value="1"/>
</dbReference>
<evidence type="ECO:0000250" key="1"/>
<evidence type="ECO:0000255" key="2">
    <source>
        <dbReference type="HAMAP-Rule" id="MF_00047"/>
    </source>
</evidence>
<feature type="chain" id="PRO_0000341171" description="D-alanine--D-alanine ligase">
    <location>
        <begin position="1"/>
        <end position="293"/>
    </location>
</feature>
<feature type="domain" description="ATP-grasp" evidence="2">
    <location>
        <begin position="98"/>
        <end position="291"/>
    </location>
</feature>
<feature type="binding site" evidence="2">
    <location>
        <begin position="124"/>
        <end position="177"/>
    </location>
    <ligand>
        <name>ATP</name>
        <dbReference type="ChEBI" id="CHEBI:30616"/>
    </ligand>
</feature>
<feature type="binding site" evidence="2">
    <location>
        <position position="245"/>
    </location>
    <ligand>
        <name>Mg(2+)</name>
        <dbReference type="ChEBI" id="CHEBI:18420"/>
        <label>1</label>
    </ligand>
</feature>
<feature type="binding site" evidence="2">
    <location>
        <position position="258"/>
    </location>
    <ligand>
        <name>Mg(2+)</name>
        <dbReference type="ChEBI" id="CHEBI:18420"/>
        <label>1</label>
    </ligand>
</feature>
<feature type="binding site" evidence="2">
    <location>
        <position position="258"/>
    </location>
    <ligand>
        <name>Mg(2+)</name>
        <dbReference type="ChEBI" id="CHEBI:18420"/>
        <label>2</label>
    </ligand>
</feature>
<feature type="binding site" evidence="2">
    <location>
        <position position="260"/>
    </location>
    <ligand>
        <name>Mg(2+)</name>
        <dbReference type="ChEBI" id="CHEBI:18420"/>
        <label>2</label>
    </ligand>
</feature>
<comment type="function">
    <text evidence="2">Cell wall formation.</text>
</comment>
<comment type="catalytic activity">
    <reaction evidence="2">
        <text>2 D-alanine + ATP = D-alanyl-D-alanine + ADP + phosphate + H(+)</text>
        <dbReference type="Rhea" id="RHEA:11224"/>
        <dbReference type="ChEBI" id="CHEBI:15378"/>
        <dbReference type="ChEBI" id="CHEBI:30616"/>
        <dbReference type="ChEBI" id="CHEBI:43474"/>
        <dbReference type="ChEBI" id="CHEBI:57416"/>
        <dbReference type="ChEBI" id="CHEBI:57822"/>
        <dbReference type="ChEBI" id="CHEBI:456216"/>
        <dbReference type="EC" id="6.3.2.4"/>
    </reaction>
</comment>
<comment type="cofactor">
    <cofactor evidence="1">
        <name>Mg(2+)</name>
        <dbReference type="ChEBI" id="CHEBI:18420"/>
    </cofactor>
    <cofactor evidence="1">
        <name>Mn(2+)</name>
        <dbReference type="ChEBI" id="CHEBI:29035"/>
    </cofactor>
    <text evidence="1">Binds 2 magnesium or manganese ions per subunit.</text>
</comment>
<comment type="pathway">
    <text evidence="2">Cell wall biogenesis; peptidoglycan biosynthesis.</text>
</comment>
<comment type="subcellular location">
    <subcellularLocation>
        <location evidence="2">Cytoplasm</location>
    </subcellularLocation>
</comment>
<comment type="similarity">
    <text evidence="2">Belongs to the D-alanine--D-alanine ligase family.</text>
</comment>
<keyword id="KW-0067">ATP-binding</keyword>
<keyword id="KW-0133">Cell shape</keyword>
<keyword id="KW-0961">Cell wall biogenesis/degradation</keyword>
<keyword id="KW-0963">Cytoplasm</keyword>
<keyword id="KW-0436">Ligase</keyword>
<keyword id="KW-0460">Magnesium</keyword>
<keyword id="KW-0464">Manganese</keyword>
<keyword id="KW-0479">Metal-binding</keyword>
<keyword id="KW-0547">Nucleotide-binding</keyword>
<keyword id="KW-0573">Peptidoglycan synthesis</keyword>
<accession>A1AX29</accession>
<name>DDL_RUTMC</name>
<protein>
    <recommendedName>
        <fullName evidence="2">D-alanine--D-alanine ligase</fullName>
        <ecNumber evidence="2">6.3.2.4</ecNumber>
    </recommendedName>
    <alternativeName>
        <fullName evidence="2">D-Ala-D-Ala ligase</fullName>
    </alternativeName>
    <alternativeName>
        <fullName evidence="2">D-alanylalanine synthetase</fullName>
    </alternativeName>
</protein>
<proteinExistence type="inferred from homology"/>
<reference key="1">
    <citation type="journal article" date="2007" name="Science">
        <title>The Calyptogena magnifica chemoautotrophic symbiont genome.</title>
        <authorList>
            <person name="Newton I.L.G."/>
            <person name="Woyke T."/>
            <person name="Auchtung T.A."/>
            <person name="Dilly G.F."/>
            <person name="Dutton R.J."/>
            <person name="Fisher M.C."/>
            <person name="Fontanez K.M."/>
            <person name="Lau E."/>
            <person name="Stewart F.J."/>
            <person name="Richardson P.M."/>
            <person name="Barry K.W."/>
            <person name="Saunders E."/>
            <person name="Detter J.C."/>
            <person name="Wu D."/>
            <person name="Eisen J.A."/>
            <person name="Cavanaugh C.M."/>
        </authorList>
    </citation>
    <scope>NUCLEOTIDE SEQUENCE [LARGE SCALE GENOMIC DNA]</scope>
</reference>
<organism>
    <name type="scientific">Ruthia magnifica subsp. Calyptogena magnifica</name>
    <dbReference type="NCBI Taxonomy" id="413404"/>
    <lineage>
        <taxon>Bacteria</taxon>
        <taxon>Pseudomonadati</taxon>
        <taxon>Pseudomonadota</taxon>
        <taxon>Gammaproteobacteria</taxon>
        <taxon>Candidatus Pseudothioglobaceae</taxon>
        <taxon>Candidatus Ruthturnera</taxon>
    </lineage>
</organism>
<sequence length="293" mass="32800">MIAVLMGGNSAERAVSLKSGEAVYQALINQNINCFEFDWHGYNLSELWQQEFDQAFIVLHGRGGEDGYIQKQLENRCIRYTGSDSNASHNGIDKARTKIIWKQHNLTLAPSIVASIHKPIEPIDFPLPWMVKPTLEGSSIGISKVDSQIQLNNALMLAWQYNSHALIEQWIEGDEYTVAILGDKALPVVKIITDQGFYDYESKYHSNKIQYLCPCGLSSSQEQVLQVIALKAFFAINAKGWGRVDFIINQHNKPYLLEINTVPGMTSHSLVPMAAKAMGMSFNKLVVAIINEI</sequence>
<gene>
    <name evidence="2" type="primary">ddl</name>
    <name type="ordered locus">Rmag_0759</name>
</gene>